<gene>
    <name type="ORF">Bm1_01445</name>
</gene>
<accession>A8NFF0</accession>
<name>TRMB_BRUMA</name>
<reference key="1">
    <citation type="journal article" date="2007" name="Science">
        <title>Draft genome of the filarial nematode parasite Brugia malayi.</title>
        <authorList>
            <person name="Ghedin E."/>
            <person name="Wang S."/>
            <person name="Spiro D."/>
            <person name="Caler E."/>
            <person name="Zhao Q."/>
            <person name="Crabtree J."/>
            <person name="Allen J.E."/>
            <person name="Delcher A.L."/>
            <person name="Guiliano D.B."/>
            <person name="Miranda-Saavedra D."/>
            <person name="Angiuoli S.V."/>
            <person name="Creasy T."/>
            <person name="Amedeo P."/>
            <person name="Haas B."/>
            <person name="El-Sayed N.M."/>
            <person name="Wortman J.R."/>
            <person name="Feldblyum T."/>
            <person name="Tallon L."/>
            <person name="Schatz M."/>
            <person name="Shumway M."/>
            <person name="Koo H."/>
            <person name="Salzberg S.L."/>
            <person name="Schobel S."/>
            <person name="Pertea M."/>
            <person name="Pop M."/>
            <person name="White O."/>
            <person name="Barton G.J."/>
            <person name="Carlow C.K.S."/>
            <person name="Crawford M.J."/>
            <person name="Daub J."/>
            <person name="Dimmic M.W."/>
            <person name="Estes C.F."/>
            <person name="Foster J.M."/>
            <person name="Ganatra M."/>
            <person name="Gregory W.F."/>
            <person name="Johnson N.M."/>
            <person name="Jin J."/>
            <person name="Komuniecki R."/>
            <person name="Korf I."/>
            <person name="Kumar S."/>
            <person name="Laney S."/>
            <person name="Li B.-W."/>
            <person name="Li W."/>
            <person name="Lindblom T.H."/>
            <person name="Lustigman S."/>
            <person name="Ma D."/>
            <person name="Maina C.V."/>
            <person name="Martin D.M."/>
            <person name="McCarter J.P."/>
            <person name="McReynolds L."/>
            <person name="Mitreva M."/>
            <person name="Nutman T.B."/>
            <person name="Parkinson J."/>
            <person name="Peregrin-Alvarez J.M."/>
            <person name="Poole C."/>
            <person name="Ren Q."/>
            <person name="Saunders L."/>
            <person name="Sluder A.E."/>
            <person name="Smith K."/>
            <person name="Stanke M."/>
            <person name="Unnasch T.R."/>
            <person name="Ware J."/>
            <person name="Wei A.D."/>
            <person name="Weil G."/>
            <person name="Williams D.J."/>
            <person name="Zhang Y."/>
            <person name="Williams S.A."/>
            <person name="Fraser-Liggett C."/>
            <person name="Slatko B."/>
            <person name="Blaxter M.L."/>
            <person name="Scott A.L."/>
        </authorList>
    </citation>
    <scope>NUCLEOTIDE SEQUENCE [LARGE SCALE GENOMIC DNA]</scope>
</reference>
<sequence length="258" mass="30286">MVSTENKIGLFKNKDDDIDGEEMRELPQKKFYRQRAHANPISDHEFDYPVFPEQMDWKKYFGDFSEGRQVEFADVGCGYGGLLIKLSTLYPEALMVGLEIRVKVSDYVQDKIHALRLREPGNYRNVACLRTNAMKYLPNYFRRHQLTKMFFLYPDPHFKKAKHKWRIITPTLLAEYAYVLKPGGLVYTITDVEELHIWMVRHLSAHPLFERLTDLEMKMDPVVEMLYDSTEEGQKVARNEGSKWSAVFRRLPNPVLSS</sequence>
<comment type="function">
    <text evidence="1">Catalyzes the formation of N(7)-methylguanine at position 46 (m7G46) in tRNA.</text>
</comment>
<comment type="catalytic activity">
    <reaction evidence="1">
        <text>guanosine(46) in tRNA + S-adenosyl-L-methionine = N(7)-methylguanosine(46) in tRNA + S-adenosyl-L-homocysteine</text>
        <dbReference type="Rhea" id="RHEA:42708"/>
        <dbReference type="Rhea" id="RHEA-COMP:10188"/>
        <dbReference type="Rhea" id="RHEA-COMP:10189"/>
        <dbReference type="ChEBI" id="CHEBI:57856"/>
        <dbReference type="ChEBI" id="CHEBI:59789"/>
        <dbReference type="ChEBI" id="CHEBI:74269"/>
        <dbReference type="ChEBI" id="CHEBI:74480"/>
        <dbReference type="EC" id="2.1.1.33"/>
    </reaction>
</comment>
<comment type="pathway">
    <text evidence="1">tRNA modification; N(7)-methylguanine-tRNA biosynthesis.</text>
</comment>
<comment type="subcellular location">
    <subcellularLocation>
        <location evidence="1">Nucleus</location>
    </subcellularLocation>
</comment>
<comment type="similarity">
    <text evidence="1">Belongs to the class I-like SAM-binding methyltransferase superfamily. TrmB family.</text>
</comment>
<evidence type="ECO:0000255" key="1">
    <source>
        <dbReference type="HAMAP-Rule" id="MF_03055"/>
    </source>
</evidence>
<keyword id="KW-0489">Methyltransferase</keyword>
<keyword id="KW-0539">Nucleus</keyword>
<keyword id="KW-1185">Reference proteome</keyword>
<keyword id="KW-0694">RNA-binding</keyword>
<keyword id="KW-0949">S-adenosyl-L-methionine</keyword>
<keyword id="KW-0808">Transferase</keyword>
<keyword id="KW-0819">tRNA processing</keyword>
<keyword id="KW-0820">tRNA-binding</keyword>
<dbReference type="EC" id="2.1.1.33" evidence="1"/>
<dbReference type="EMBL" id="DS237063">
    <property type="protein sequence ID" value="EDP39397.1"/>
    <property type="molecule type" value="Genomic_DNA"/>
</dbReference>
<dbReference type="SMR" id="A8NFF0"/>
<dbReference type="FunCoup" id="A8NFF0">
    <property type="interactions" value="1044"/>
</dbReference>
<dbReference type="STRING" id="6279.A8NFF0"/>
<dbReference type="EnsemblMetazoa" id="Bm6127.1">
    <property type="protein sequence ID" value="Bm6127.1"/>
    <property type="gene ID" value="WBGene00226388"/>
</dbReference>
<dbReference type="GeneID" id="6095251"/>
<dbReference type="KEGG" id="bmy:BM_BM6127"/>
<dbReference type="CTD" id="6095251"/>
<dbReference type="WormBase" id="Bm6127">
    <property type="protein sequence ID" value="BM03027"/>
    <property type="gene ID" value="WBGene00226388"/>
</dbReference>
<dbReference type="HOGENOM" id="CLU_050910_3_0_1"/>
<dbReference type="InParanoid" id="A8NFF0"/>
<dbReference type="OrthoDB" id="47276at2759"/>
<dbReference type="UniPathway" id="UPA00989"/>
<dbReference type="Proteomes" id="UP000006672">
    <property type="component" value="Unassembled WGS sequence"/>
</dbReference>
<dbReference type="GO" id="GO:0005634">
    <property type="term" value="C:nucleus"/>
    <property type="evidence" value="ECO:0007669"/>
    <property type="project" value="UniProtKB-SubCell"/>
</dbReference>
<dbReference type="GO" id="GO:0043527">
    <property type="term" value="C:tRNA methyltransferase complex"/>
    <property type="evidence" value="ECO:0007669"/>
    <property type="project" value="TreeGrafter"/>
</dbReference>
<dbReference type="GO" id="GO:0008176">
    <property type="term" value="F:tRNA (guanine(46)-N7)-methyltransferase activity"/>
    <property type="evidence" value="ECO:0007669"/>
    <property type="project" value="UniProtKB-UniRule"/>
</dbReference>
<dbReference type="GO" id="GO:0000049">
    <property type="term" value="F:tRNA binding"/>
    <property type="evidence" value="ECO:0007669"/>
    <property type="project" value="UniProtKB-UniRule"/>
</dbReference>
<dbReference type="FunFam" id="3.40.50.150:FF:000060">
    <property type="entry name" value="tRNA (guanine-N(7)-)-methyltransferase"/>
    <property type="match status" value="1"/>
</dbReference>
<dbReference type="Gene3D" id="3.40.50.150">
    <property type="entry name" value="Vaccinia Virus protein VP39"/>
    <property type="match status" value="1"/>
</dbReference>
<dbReference type="HAMAP" id="MF_03055">
    <property type="entry name" value="tRNA_methyltr_TrmB_euk"/>
    <property type="match status" value="1"/>
</dbReference>
<dbReference type="InterPro" id="IPR029063">
    <property type="entry name" value="SAM-dependent_MTases_sf"/>
</dbReference>
<dbReference type="InterPro" id="IPR025763">
    <property type="entry name" value="Trm8_euk"/>
</dbReference>
<dbReference type="InterPro" id="IPR003358">
    <property type="entry name" value="tRNA_(Gua-N-7)_MeTrfase_Trmb"/>
</dbReference>
<dbReference type="NCBIfam" id="TIGR00091">
    <property type="entry name" value="tRNA (guanosine(46)-N7)-methyltransferase TrmB"/>
    <property type="match status" value="1"/>
</dbReference>
<dbReference type="PANTHER" id="PTHR23417">
    <property type="entry name" value="3-DEOXY-D-MANNO-OCTULOSONIC-ACID TRANSFERASE/TRNA GUANINE-N 7 - -METHYLTRANSFERASE"/>
    <property type="match status" value="1"/>
</dbReference>
<dbReference type="PANTHER" id="PTHR23417:SF16">
    <property type="entry name" value="TRNA (GUANINE-N(7)-)-METHYLTRANSFERASE"/>
    <property type="match status" value="1"/>
</dbReference>
<dbReference type="Pfam" id="PF02390">
    <property type="entry name" value="Methyltransf_4"/>
    <property type="match status" value="1"/>
</dbReference>
<dbReference type="SUPFAM" id="SSF53335">
    <property type="entry name" value="S-adenosyl-L-methionine-dependent methyltransferases"/>
    <property type="match status" value="1"/>
</dbReference>
<dbReference type="PROSITE" id="PS51625">
    <property type="entry name" value="SAM_MT_TRMB"/>
    <property type="match status" value="1"/>
</dbReference>
<feature type="chain" id="PRO_0000370562" description="tRNA (guanine-N(7)-)-methyltransferase">
    <location>
        <begin position="1"/>
        <end position="258"/>
    </location>
</feature>
<feature type="active site" evidence="1">
    <location>
        <position position="155"/>
    </location>
</feature>
<feature type="binding site" evidence="1">
    <location>
        <position position="76"/>
    </location>
    <ligand>
        <name>S-adenosyl-L-methionine</name>
        <dbReference type="ChEBI" id="CHEBI:59789"/>
    </ligand>
</feature>
<feature type="binding site" evidence="1">
    <location>
        <begin position="99"/>
        <end position="100"/>
    </location>
    <ligand>
        <name>S-adenosyl-L-methionine</name>
        <dbReference type="ChEBI" id="CHEBI:59789"/>
    </ligand>
</feature>
<feature type="binding site" evidence="1">
    <location>
        <begin position="132"/>
        <end position="133"/>
    </location>
    <ligand>
        <name>S-adenosyl-L-methionine</name>
        <dbReference type="ChEBI" id="CHEBI:59789"/>
    </ligand>
</feature>
<feature type="binding site" evidence="1">
    <location>
        <position position="152"/>
    </location>
    <ligand>
        <name>S-adenosyl-L-methionine</name>
        <dbReference type="ChEBI" id="CHEBI:59789"/>
    </ligand>
</feature>
<feature type="binding site" evidence="1">
    <location>
        <begin position="230"/>
        <end position="232"/>
    </location>
    <ligand>
        <name>S-adenosyl-L-methionine</name>
        <dbReference type="ChEBI" id="CHEBI:59789"/>
    </ligand>
</feature>
<protein>
    <recommendedName>
        <fullName evidence="1">tRNA (guanine-N(7)-)-methyltransferase</fullName>
        <ecNumber evidence="1">2.1.1.33</ecNumber>
    </recommendedName>
    <alternativeName>
        <fullName evidence="1">tRNA (guanine(46)-N(7))-methyltransferase</fullName>
    </alternativeName>
    <alternativeName>
        <fullName evidence="1">tRNA(m7G46)-methyltransferase</fullName>
    </alternativeName>
</protein>
<organism>
    <name type="scientific">Brugia malayi</name>
    <name type="common">Filarial nematode worm</name>
    <dbReference type="NCBI Taxonomy" id="6279"/>
    <lineage>
        <taxon>Eukaryota</taxon>
        <taxon>Metazoa</taxon>
        <taxon>Ecdysozoa</taxon>
        <taxon>Nematoda</taxon>
        <taxon>Chromadorea</taxon>
        <taxon>Rhabditida</taxon>
        <taxon>Spirurina</taxon>
        <taxon>Spiruromorpha</taxon>
        <taxon>Filarioidea</taxon>
        <taxon>Onchocercidae</taxon>
        <taxon>Brugia</taxon>
    </lineage>
</organism>
<proteinExistence type="inferred from homology"/>